<reference key="1">
    <citation type="journal article" date="2011" name="J. Bacteriol.">
        <title>Comparative genomics of 28 Salmonella enterica isolates: evidence for CRISPR-mediated adaptive sublineage evolution.</title>
        <authorList>
            <person name="Fricke W.F."/>
            <person name="Mammel M.K."/>
            <person name="McDermott P.F."/>
            <person name="Tartera C."/>
            <person name="White D.G."/>
            <person name="Leclerc J.E."/>
            <person name="Ravel J."/>
            <person name="Cebula T.A."/>
        </authorList>
    </citation>
    <scope>NUCLEOTIDE SEQUENCE [LARGE SCALE GENOMIC DNA]</scope>
    <source>
        <strain>CVM19633</strain>
    </source>
</reference>
<organism>
    <name type="scientific">Salmonella schwarzengrund (strain CVM19633)</name>
    <dbReference type="NCBI Taxonomy" id="439843"/>
    <lineage>
        <taxon>Bacteria</taxon>
        <taxon>Pseudomonadati</taxon>
        <taxon>Pseudomonadota</taxon>
        <taxon>Gammaproteobacteria</taxon>
        <taxon>Enterobacterales</taxon>
        <taxon>Enterobacteriaceae</taxon>
        <taxon>Salmonella</taxon>
    </lineage>
</organism>
<name>F16PA_SALSV</name>
<proteinExistence type="inferred from homology"/>
<feature type="chain" id="PRO_0000364695" description="Fructose-1,6-bisphosphatase class 1">
    <location>
        <begin position="1"/>
        <end position="332"/>
    </location>
</feature>
<feature type="binding site" evidence="1">
    <location>
        <position position="89"/>
    </location>
    <ligand>
        <name>Mg(2+)</name>
        <dbReference type="ChEBI" id="CHEBI:18420"/>
        <label>1</label>
    </ligand>
</feature>
<feature type="binding site" evidence="1">
    <location>
        <position position="110"/>
    </location>
    <ligand>
        <name>Mg(2+)</name>
        <dbReference type="ChEBI" id="CHEBI:18420"/>
        <label>1</label>
    </ligand>
</feature>
<feature type="binding site" evidence="1">
    <location>
        <position position="110"/>
    </location>
    <ligand>
        <name>Mg(2+)</name>
        <dbReference type="ChEBI" id="CHEBI:18420"/>
        <label>2</label>
    </ligand>
</feature>
<feature type="binding site" evidence="1">
    <location>
        <position position="112"/>
    </location>
    <ligand>
        <name>Mg(2+)</name>
        <dbReference type="ChEBI" id="CHEBI:18420"/>
        <label>1</label>
    </ligand>
</feature>
<feature type="binding site" evidence="1">
    <location>
        <begin position="113"/>
        <end position="116"/>
    </location>
    <ligand>
        <name>substrate</name>
    </ligand>
</feature>
<feature type="binding site" evidence="1">
    <location>
        <position position="113"/>
    </location>
    <ligand>
        <name>Mg(2+)</name>
        <dbReference type="ChEBI" id="CHEBI:18420"/>
        <label>2</label>
    </ligand>
</feature>
<feature type="binding site" evidence="1">
    <location>
        <position position="206"/>
    </location>
    <ligand>
        <name>substrate</name>
    </ligand>
</feature>
<feature type="binding site" evidence="1">
    <location>
        <position position="239"/>
    </location>
    <ligand>
        <name>substrate</name>
    </ligand>
</feature>
<feature type="binding site" evidence="1">
    <location>
        <begin position="257"/>
        <end position="259"/>
    </location>
    <ligand>
        <name>substrate</name>
    </ligand>
</feature>
<feature type="binding site" evidence="1">
    <location>
        <position position="269"/>
    </location>
    <ligand>
        <name>substrate</name>
    </ligand>
</feature>
<feature type="binding site" evidence="1">
    <location>
        <position position="275"/>
    </location>
    <ligand>
        <name>Mg(2+)</name>
        <dbReference type="ChEBI" id="CHEBI:18420"/>
        <label>2</label>
    </ligand>
</feature>
<sequence>MKTLGEFIVEKQHEFSQATGELTALLSAIKLGAKIIHRDINKAGLVDILGASGAENVQGEVQQKLDLFANEKLKAALKARDIVAGIASEEEDEIVVFEGCEHAKYVVLMDPLDGSSNIDVNVSVGTIFSIYRRVTPVGTPVTEEDFLQPGNKQVAAGYVVYGSSTMLVYTTGCGVHAFTYDPSLGVFCLCQERMRFPEKGKTYSINEGNYIKFPNGVKKYIKFCQEEDSSTSRPYTSRYIGSLVADFHRNLLKGGIYLYPSTASHPQGKLRLLYECNPMAFLAEQAGGKASDGKERILDIIPESLHQRRSFFVGNRHMVDDVERFIREYPDA</sequence>
<keyword id="KW-0119">Carbohydrate metabolism</keyword>
<keyword id="KW-0963">Cytoplasm</keyword>
<keyword id="KW-0378">Hydrolase</keyword>
<keyword id="KW-0460">Magnesium</keyword>
<keyword id="KW-0479">Metal-binding</keyword>
<protein>
    <recommendedName>
        <fullName evidence="1">Fructose-1,6-bisphosphatase class 1</fullName>
        <shortName evidence="1">FBPase class 1</shortName>
        <ecNumber evidence="1">3.1.3.11</ecNumber>
    </recommendedName>
    <alternativeName>
        <fullName evidence="1">D-fructose-1,6-bisphosphate 1-phosphohydrolase class 1</fullName>
    </alternativeName>
</protein>
<gene>
    <name evidence="1" type="primary">fbp</name>
    <name type="ordered locus">SeSA_A4684</name>
</gene>
<accession>B4TT57</accession>
<comment type="catalytic activity">
    <reaction evidence="1">
        <text>beta-D-fructose 1,6-bisphosphate + H2O = beta-D-fructose 6-phosphate + phosphate</text>
        <dbReference type="Rhea" id="RHEA:11064"/>
        <dbReference type="ChEBI" id="CHEBI:15377"/>
        <dbReference type="ChEBI" id="CHEBI:32966"/>
        <dbReference type="ChEBI" id="CHEBI:43474"/>
        <dbReference type="ChEBI" id="CHEBI:57634"/>
        <dbReference type="EC" id="3.1.3.11"/>
    </reaction>
</comment>
<comment type="cofactor">
    <cofactor evidence="1">
        <name>Mg(2+)</name>
        <dbReference type="ChEBI" id="CHEBI:18420"/>
    </cofactor>
    <text evidence="1">Binds 2 magnesium ions per subunit.</text>
</comment>
<comment type="pathway">
    <text evidence="1">Carbohydrate biosynthesis; gluconeogenesis.</text>
</comment>
<comment type="subunit">
    <text evidence="1">Homotetramer.</text>
</comment>
<comment type="subcellular location">
    <subcellularLocation>
        <location evidence="1">Cytoplasm</location>
    </subcellularLocation>
</comment>
<comment type="similarity">
    <text evidence="1">Belongs to the FBPase class 1 family.</text>
</comment>
<dbReference type="EC" id="3.1.3.11" evidence="1"/>
<dbReference type="EMBL" id="CP001127">
    <property type="protein sequence ID" value="ACF92278.1"/>
    <property type="molecule type" value="Genomic_DNA"/>
</dbReference>
<dbReference type="RefSeq" id="WP_000853764.1">
    <property type="nucleotide sequence ID" value="NC_011094.1"/>
</dbReference>
<dbReference type="SMR" id="B4TT57"/>
<dbReference type="KEGG" id="sew:SeSA_A4684"/>
<dbReference type="HOGENOM" id="CLU_039977_2_2_6"/>
<dbReference type="UniPathway" id="UPA00138"/>
<dbReference type="Proteomes" id="UP000001865">
    <property type="component" value="Chromosome"/>
</dbReference>
<dbReference type="GO" id="GO:0005829">
    <property type="term" value="C:cytosol"/>
    <property type="evidence" value="ECO:0007669"/>
    <property type="project" value="TreeGrafter"/>
</dbReference>
<dbReference type="GO" id="GO:0042132">
    <property type="term" value="F:fructose 1,6-bisphosphate 1-phosphatase activity"/>
    <property type="evidence" value="ECO:0007669"/>
    <property type="project" value="UniProtKB-UniRule"/>
</dbReference>
<dbReference type="GO" id="GO:0000287">
    <property type="term" value="F:magnesium ion binding"/>
    <property type="evidence" value="ECO:0007669"/>
    <property type="project" value="UniProtKB-UniRule"/>
</dbReference>
<dbReference type="GO" id="GO:0030388">
    <property type="term" value="P:fructose 1,6-bisphosphate metabolic process"/>
    <property type="evidence" value="ECO:0007669"/>
    <property type="project" value="TreeGrafter"/>
</dbReference>
<dbReference type="GO" id="GO:0006002">
    <property type="term" value="P:fructose 6-phosphate metabolic process"/>
    <property type="evidence" value="ECO:0007669"/>
    <property type="project" value="TreeGrafter"/>
</dbReference>
<dbReference type="GO" id="GO:0006000">
    <property type="term" value="P:fructose metabolic process"/>
    <property type="evidence" value="ECO:0007669"/>
    <property type="project" value="TreeGrafter"/>
</dbReference>
<dbReference type="GO" id="GO:0006094">
    <property type="term" value="P:gluconeogenesis"/>
    <property type="evidence" value="ECO:0007669"/>
    <property type="project" value="UniProtKB-UniRule"/>
</dbReference>
<dbReference type="GO" id="GO:0005986">
    <property type="term" value="P:sucrose biosynthetic process"/>
    <property type="evidence" value="ECO:0007669"/>
    <property type="project" value="TreeGrafter"/>
</dbReference>
<dbReference type="CDD" id="cd00354">
    <property type="entry name" value="FBPase"/>
    <property type="match status" value="1"/>
</dbReference>
<dbReference type="FunFam" id="3.30.540.10:FF:000002">
    <property type="entry name" value="Fructose-1,6-bisphosphatase class 1"/>
    <property type="match status" value="1"/>
</dbReference>
<dbReference type="FunFam" id="3.40.190.80:FF:000001">
    <property type="entry name" value="Fructose-1,6-bisphosphatase class 1"/>
    <property type="match status" value="1"/>
</dbReference>
<dbReference type="Gene3D" id="3.40.190.80">
    <property type="match status" value="1"/>
</dbReference>
<dbReference type="Gene3D" id="3.30.540.10">
    <property type="entry name" value="Fructose-1,6-Bisphosphatase, subunit A, domain 1"/>
    <property type="match status" value="1"/>
</dbReference>
<dbReference type="HAMAP" id="MF_01855">
    <property type="entry name" value="FBPase_class1"/>
    <property type="match status" value="1"/>
</dbReference>
<dbReference type="InterPro" id="IPR044015">
    <property type="entry name" value="FBPase_C_dom"/>
</dbReference>
<dbReference type="InterPro" id="IPR000146">
    <property type="entry name" value="FBPase_class-1"/>
</dbReference>
<dbReference type="InterPro" id="IPR033391">
    <property type="entry name" value="FBPase_N"/>
</dbReference>
<dbReference type="InterPro" id="IPR028343">
    <property type="entry name" value="FBPtase"/>
</dbReference>
<dbReference type="InterPro" id="IPR020548">
    <property type="entry name" value="Fructose_bisphosphatase_AS"/>
</dbReference>
<dbReference type="NCBIfam" id="NF006778">
    <property type="entry name" value="PRK09293.1-1"/>
    <property type="match status" value="1"/>
</dbReference>
<dbReference type="NCBIfam" id="NF006779">
    <property type="entry name" value="PRK09293.1-3"/>
    <property type="match status" value="1"/>
</dbReference>
<dbReference type="PANTHER" id="PTHR11556">
    <property type="entry name" value="FRUCTOSE-1,6-BISPHOSPHATASE-RELATED"/>
    <property type="match status" value="1"/>
</dbReference>
<dbReference type="PANTHER" id="PTHR11556:SF35">
    <property type="entry name" value="SEDOHEPTULOSE-1,7-BISPHOSPHATASE, CHLOROPLASTIC"/>
    <property type="match status" value="1"/>
</dbReference>
<dbReference type="Pfam" id="PF00316">
    <property type="entry name" value="FBPase"/>
    <property type="match status" value="1"/>
</dbReference>
<dbReference type="Pfam" id="PF18913">
    <property type="entry name" value="FBPase_C"/>
    <property type="match status" value="1"/>
</dbReference>
<dbReference type="PIRSF" id="PIRSF500210">
    <property type="entry name" value="FBPtase"/>
    <property type="match status" value="1"/>
</dbReference>
<dbReference type="PIRSF" id="PIRSF000904">
    <property type="entry name" value="FBPtase_SBPase"/>
    <property type="match status" value="1"/>
</dbReference>
<dbReference type="PRINTS" id="PR00115">
    <property type="entry name" value="F16BPHPHTASE"/>
</dbReference>
<dbReference type="SUPFAM" id="SSF56655">
    <property type="entry name" value="Carbohydrate phosphatase"/>
    <property type="match status" value="1"/>
</dbReference>
<dbReference type="PROSITE" id="PS00124">
    <property type="entry name" value="FBPASE"/>
    <property type="match status" value="1"/>
</dbReference>
<evidence type="ECO:0000255" key="1">
    <source>
        <dbReference type="HAMAP-Rule" id="MF_01855"/>
    </source>
</evidence>